<organism>
    <name type="scientific">Bacillus velezensis (strain DSM 23117 / BGSC 10A6 / LMG 26770 / FZB42)</name>
    <name type="common">Bacillus amyloliquefaciens subsp. plantarum</name>
    <dbReference type="NCBI Taxonomy" id="326423"/>
    <lineage>
        <taxon>Bacteria</taxon>
        <taxon>Bacillati</taxon>
        <taxon>Bacillota</taxon>
        <taxon>Bacilli</taxon>
        <taxon>Bacillales</taxon>
        <taxon>Bacillaceae</taxon>
        <taxon>Bacillus</taxon>
        <taxon>Bacillus amyloliquefaciens group</taxon>
    </lineage>
</organism>
<protein>
    <recommendedName>
        <fullName evidence="1">Fructose-1,6-bisphosphatase class 3</fullName>
        <shortName evidence="1">FBPase class 3</shortName>
        <ecNumber evidence="1">3.1.3.11</ecNumber>
    </recommendedName>
    <alternativeName>
        <fullName evidence="1">D-fructose-1,6-bisphosphate 1-phosphohydrolase class 3</fullName>
    </alternativeName>
</protein>
<reference key="1">
    <citation type="journal article" date="2007" name="Nat. Biotechnol.">
        <title>Comparative analysis of the complete genome sequence of the plant growth-promoting bacterium Bacillus amyloliquefaciens FZB42.</title>
        <authorList>
            <person name="Chen X.H."/>
            <person name="Koumoutsi A."/>
            <person name="Scholz R."/>
            <person name="Eisenreich A."/>
            <person name="Schneider K."/>
            <person name="Heinemeyer I."/>
            <person name="Morgenstern B."/>
            <person name="Voss B."/>
            <person name="Hess W.R."/>
            <person name="Reva O."/>
            <person name="Junge H."/>
            <person name="Voigt B."/>
            <person name="Jungblut P.R."/>
            <person name="Vater J."/>
            <person name="Suessmuth R."/>
            <person name="Liesegang H."/>
            <person name="Strittmatter A."/>
            <person name="Gottschalk G."/>
            <person name="Borriss R."/>
        </authorList>
    </citation>
    <scope>NUCLEOTIDE SEQUENCE [LARGE SCALE GENOMIC DNA]</scope>
    <source>
        <strain>DSM 23117 / BGSC 10A6 / LMG 26770 / FZB42</strain>
    </source>
</reference>
<proteinExistence type="inferred from homology"/>
<gene>
    <name evidence="1" type="primary">fbp</name>
    <name type="ordered locus">RBAM_037000</name>
</gene>
<evidence type="ECO:0000255" key="1">
    <source>
        <dbReference type="HAMAP-Rule" id="MF_01854"/>
    </source>
</evidence>
<keyword id="KW-0119">Carbohydrate metabolism</keyword>
<keyword id="KW-0378">Hydrolase</keyword>
<keyword id="KW-0464">Manganese</keyword>
<dbReference type="EC" id="3.1.3.11" evidence="1"/>
<dbReference type="EMBL" id="CP000560">
    <property type="protein sequence ID" value="ABS76029.1"/>
    <property type="molecule type" value="Genomic_DNA"/>
</dbReference>
<dbReference type="RefSeq" id="WP_012118863.1">
    <property type="nucleotide sequence ID" value="NC_009725.2"/>
</dbReference>
<dbReference type="GeneID" id="93082838"/>
<dbReference type="KEGG" id="bay:RBAM_037000"/>
<dbReference type="HOGENOM" id="CLU_028392_2_0_9"/>
<dbReference type="UniPathway" id="UPA00138"/>
<dbReference type="Proteomes" id="UP000001120">
    <property type="component" value="Chromosome"/>
</dbReference>
<dbReference type="GO" id="GO:0042132">
    <property type="term" value="F:fructose 1,6-bisphosphate 1-phosphatase activity"/>
    <property type="evidence" value="ECO:0007669"/>
    <property type="project" value="UniProtKB-UniRule"/>
</dbReference>
<dbReference type="GO" id="GO:0006094">
    <property type="term" value="P:gluconeogenesis"/>
    <property type="evidence" value="ECO:0007669"/>
    <property type="project" value="UniProtKB-UniRule"/>
</dbReference>
<dbReference type="Gene3D" id="3.60.21.10">
    <property type="match status" value="1"/>
</dbReference>
<dbReference type="HAMAP" id="MF_01854">
    <property type="entry name" value="FBPase_class3"/>
    <property type="match status" value="1"/>
</dbReference>
<dbReference type="InterPro" id="IPR009164">
    <property type="entry name" value="FBPtase_class3"/>
</dbReference>
<dbReference type="InterPro" id="IPR029052">
    <property type="entry name" value="Metallo-depent_PP-like"/>
</dbReference>
<dbReference type="Pfam" id="PF06874">
    <property type="entry name" value="FBPase_2"/>
    <property type="match status" value="1"/>
</dbReference>
<dbReference type="PIRSF" id="PIRSF000906">
    <property type="entry name" value="FBPtase_Bacill"/>
    <property type="match status" value="1"/>
</dbReference>
<dbReference type="SUPFAM" id="SSF56300">
    <property type="entry name" value="Metallo-dependent phosphatases"/>
    <property type="match status" value="1"/>
</dbReference>
<name>F16PC_BACVZ</name>
<feature type="chain" id="PRO_0000363072" description="Fructose-1,6-bisphosphatase class 3">
    <location>
        <begin position="1"/>
        <end position="641"/>
    </location>
</feature>
<comment type="catalytic activity">
    <reaction evidence="1">
        <text>beta-D-fructose 1,6-bisphosphate + H2O = beta-D-fructose 6-phosphate + phosphate</text>
        <dbReference type="Rhea" id="RHEA:11064"/>
        <dbReference type="ChEBI" id="CHEBI:15377"/>
        <dbReference type="ChEBI" id="CHEBI:32966"/>
        <dbReference type="ChEBI" id="CHEBI:43474"/>
        <dbReference type="ChEBI" id="CHEBI:57634"/>
        <dbReference type="EC" id="3.1.3.11"/>
    </reaction>
</comment>
<comment type="cofactor">
    <cofactor evidence="1">
        <name>Mn(2+)</name>
        <dbReference type="ChEBI" id="CHEBI:29035"/>
    </cofactor>
</comment>
<comment type="pathway">
    <text evidence="1">Carbohydrate biosynthesis; gluconeogenesis.</text>
</comment>
<comment type="similarity">
    <text evidence="1">Belongs to the FBPase class 3 family.</text>
</comment>
<accession>A7ZAK3</accession>
<sequence length="641" mass="74558">METKYLDLLAQKYDCEEKVVTEIINLKAILNLPKGTEHFVSDLHGEYQAFQHVLRNGSGRVKEKIRDIFSGVIYDREIDELAALVYYPEDKLKLIKHDFDTKEALNEWYKETIHRMIKLVSYCSSKYTRSKLRKALPAQFAYISEELLYKTEQAANKEQYYSEIIEQIIALGQADKLITGLAYSTQRLVVDHLHVVGDIYDRGPQPDKIMEELINYHSVDIQWGNHDVLWIGAYSGSKVCLANIIRICARYDNLDIIEDVYGINLRPLLNLAEKYYDDNPSFRPKADENRPEDEIKQITKIHQAIAMIQFKLESPIIKRRPNFNMEERLLLEKIDYDRNEITLNGKTYQLENTCFATVNPKQPDELLEEEAEVMDKLLFSVQNSEKLGRHMNFMMKKGSLYLKYNGNLLIHGCIPVDENGSMETMMIEDKAYAGRELLDVFERFLREAFAHPEETDDLATDMTWYLWTGEYSSLFGKRAMTTFERYFIKEKETHKEKKNPYYYLREDEAACRNILMEFGLNPDHGHIINGHTPVKEIEGEDPIKANGKMIVIDGGFSKAYQSTTGIAGYTLLYNSYGMQLVAHKHFNSKAEVLSTGTDVLTVKRLVDKELERKKVKETNVGEELMKEVAILEKLREYRYMK</sequence>